<reference key="1">
    <citation type="journal article" date="2003" name="Mol. Microbiol.">
        <title>An integrated analysis of the genome of the hyperthermophilic archaeon Pyrococcus abyssi.</title>
        <authorList>
            <person name="Cohen G.N."/>
            <person name="Barbe V."/>
            <person name="Flament D."/>
            <person name="Galperin M."/>
            <person name="Heilig R."/>
            <person name="Lecompte O."/>
            <person name="Poch O."/>
            <person name="Prieur D."/>
            <person name="Querellou J."/>
            <person name="Ripp R."/>
            <person name="Thierry J.-C."/>
            <person name="Van der Oost J."/>
            <person name="Weissenbach J."/>
            <person name="Zivanovic Y."/>
            <person name="Forterre P."/>
        </authorList>
    </citation>
    <scope>NUCLEOTIDE SEQUENCE [LARGE SCALE GENOMIC DNA]</scope>
    <source>
        <strain>GE5 / Orsay</strain>
    </source>
</reference>
<reference key="2">
    <citation type="journal article" date="2012" name="Curr. Microbiol.">
        <title>Re-annotation of two hyperthermophilic archaea Pyrococcus abyssi GE5 and Pyrococcus furiosus DSM 3638.</title>
        <authorList>
            <person name="Gao J."/>
            <person name="Wang J."/>
        </authorList>
    </citation>
    <scope>GENOME REANNOTATION</scope>
    <source>
        <strain>GE5 / Orsay</strain>
    </source>
</reference>
<evidence type="ECO:0000255" key="1">
    <source>
        <dbReference type="HAMAP-Rule" id="MF_02076"/>
    </source>
</evidence>
<comment type="function">
    <text evidence="1">Catalyzes the attachment of glutamate to tRNA(Glu) in a two-step reaction: glutamate is first activated by ATP to form Glu-AMP and then transferred to the acceptor end of tRNA(Glu).</text>
</comment>
<comment type="catalytic activity">
    <reaction evidence="1">
        <text>tRNA(Glu) + L-glutamate + ATP = L-glutamyl-tRNA(Glu) + AMP + diphosphate</text>
        <dbReference type="Rhea" id="RHEA:23540"/>
        <dbReference type="Rhea" id="RHEA-COMP:9663"/>
        <dbReference type="Rhea" id="RHEA-COMP:9680"/>
        <dbReference type="ChEBI" id="CHEBI:29985"/>
        <dbReference type="ChEBI" id="CHEBI:30616"/>
        <dbReference type="ChEBI" id="CHEBI:33019"/>
        <dbReference type="ChEBI" id="CHEBI:78442"/>
        <dbReference type="ChEBI" id="CHEBI:78520"/>
        <dbReference type="ChEBI" id="CHEBI:456215"/>
        <dbReference type="EC" id="6.1.1.17"/>
    </reaction>
</comment>
<comment type="subcellular location">
    <subcellularLocation>
        <location evidence="1">Cytoplasm</location>
    </subcellularLocation>
</comment>
<comment type="similarity">
    <text evidence="1">Belongs to the class-I aminoacyl-tRNA synthetase family. Glutamate--tRNA ligase type 2 subfamily.</text>
</comment>
<sequence>MEVERIALKYALINAIEHGGKANPKAVIGKVLGENPELRSKAREIVPIINKVVEEVNSLSLDEQKAKLMEIYPEYFEKKEEKKEEKKGLPPLPKAEKGKVVTRFAPNPDGAFHLGNARAAILSYEYAKMYGGKFILRFDDTDPKVKRPEPIFYEMIIEDLEWLGIKPDEIVYASDRLELYYKYAEELIKMGKAYVCTCKPEKFRELRDKGIPCPHRDEPVEVQLERWRKMLNGEYKEGEAVVRIKTDLNHPNPAVRDWPALRIVDNPNHPRAGNKYRVWPLYNFASAIDDHELGVTHIFRGQEHAENETRQRYIYEYFGWEYPVTVHHGRLSIEGVILSKSKTRKGIEEGKYLGWDDPRLGTIRALRRRGILPEAIKELIIEVGLKKSDATVSWDNLAAINRKLVDPIANRYFFVADPVPMEVEGAPEFIAKIPLHPDHPERGTRELRFTPGKPIYVSKDDLDLLKPGSFVRLKDLFNVEIVEVGEKIKAKFHSFEYEIARKNKWRMIHWVPEGRPCEVIIPEGDELIVRKGLLEKDANVKAGEIVQFERFGFVRIDKIEGEKVVAIYAHK</sequence>
<accession>Q9V1E3</accession>
<accession>G8ZGI9</accession>
<keyword id="KW-0030">Aminoacyl-tRNA synthetase</keyword>
<keyword id="KW-0067">ATP-binding</keyword>
<keyword id="KW-0963">Cytoplasm</keyword>
<keyword id="KW-0436">Ligase</keyword>
<keyword id="KW-0547">Nucleotide-binding</keyword>
<keyword id="KW-0648">Protein biosynthesis</keyword>
<feature type="chain" id="PRO_0000119725" description="Glutamate--tRNA ligase">
    <location>
        <begin position="1"/>
        <end position="571"/>
    </location>
</feature>
<feature type="short sequence motif" description="'HIGH' region" evidence="1">
    <location>
        <begin position="106"/>
        <end position="116"/>
    </location>
</feature>
<organism>
    <name type="scientific">Pyrococcus abyssi (strain GE5 / Orsay)</name>
    <dbReference type="NCBI Taxonomy" id="272844"/>
    <lineage>
        <taxon>Archaea</taxon>
        <taxon>Methanobacteriati</taxon>
        <taxon>Methanobacteriota</taxon>
        <taxon>Thermococci</taxon>
        <taxon>Thermococcales</taxon>
        <taxon>Thermococcaceae</taxon>
        <taxon>Pyrococcus</taxon>
    </lineage>
</organism>
<proteinExistence type="inferred from homology"/>
<gene>
    <name evidence="1" type="primary">gltX</name>
    <name type="ordered locus">PYRAB04840</name>
    <name type="ORF">PAB0323</name>
</gene>
<protein>
    <recommendedName>
        <fullName evidence="1">Glutamate--tRNA ligase</fullName>
        <ecNumber evidence="1">6.1.1.17</ecNumber>
    </recommendedName>
    <alternativeName>
        <fullName evidence="1">Glutamyl-tRNA synthetase</fullName>
        <shortName evidence="1">GluRS</shortName>
    </alternativeName>
</protein>
<name>SYE_PYRAB</name>
<dbReference type="EC" id="6.1.1.17" evidence="1"/>
<dbReference type="EMBL" id="AJ248284">
    <property type="protein sequence ID" value="CAB49406.1"/>
    <property type="molecule type" value="Genomic_DNA"/>
</dbReference>
<dbReference type="EMBL" id="HE613800">
    <property type="protein sequence ID" value="CCE69868.1"/>
    <property type="molecule type" value="Genomic_DNA"/>
</dbReference>
<dbReference type="PIR" id="G75165">
    <property type="entry name" value="G75165"/>
</dbReference>
<dbReference type="RefSeq" id="WP_010867608.1">
    <property type="nucleotide sequence ID" value="NC_000868.1"/>
</dbReference>
<dbReference type="SMR" id="Q9V1E3"/>
<dbReference type="STRING" id="272844.PAB0323"/>
<dbReference type="KEGG" id="pab:PAB0323"/>
<dbReference type="PATRIC" id="fig|272844.11.peg.512"/>
<dbReference type="eggNOG" id="arCOG04302">
    <property type="taxonomic scope" value="Archaea"/>
</dbReference>
<dbReference type="HOGENOM" id="CLU_001882_1_3_2"/>
<dbReference type="OrthoDB" id="10470at2157"/>
<dbReference type="PhylomeDB" id="Q9V1E3"/>
<dbReference type="Proteomes" id="UP000000810">
    <property type="component" value="Chromosome"/>
</dbReference>
<dbReference type="Proteomes" id="UP000009139">
    <property type="component" value="Chromosome"/>
</dbReference>
<dbReference type="GO" id="GO:0005829">
    <property type="term" value="C:cytosol"/>
    <property type="evidence" value="ECO:0007669"/>
    <property type="project" value="TreeGrafter"/>
</dbReference>
<dbReference type="GO" id="GO:0005524">
    <property type="term" value="F:ATP binding"/>
    <property type="evidence" value="ECO:0007669"/>
    <property type="project" value="UniProtKB-UniRule"/>
</dbReference>
<dbReference type="GO" id="GO:0004818">
    <property type="term" value="F:glutamate-tRNA ligase activity"/>
    <property type="evidence" value="ECO:0007669"/>
    <property type="project" value="UniProtKB-UniRule"/>
</dbReference>
<dbReference type="GO" id="GO:0043604">
    <property type="term" value="P:amide biosynthetic process"/>
    <property type="evidence" value="ECO:0007669"/>
    <property type="project" value="TreeGrafter"/>
</dbReference>
<dbReference type="GO" id="GO:0006424">
    <property type="term" value="P:glutamyl-tRNA aminoacylation"/>
    <property type="evidence" value="ECO:0007669"/>
    <property type="project" value="UniProtKB-UniRule"/>
</dbReference>
<dbReference type="CDD" id="cd09287">
    <property type="entry name" value="GluRS_non_core"/>
    <property type="match status" value="1"/>
</dbReference>
<dbReference type="FunFam" id="2.40.240.10:FF:000033">
    <property type="entry name" value="Glutamate--tRNA ligase"/>
    <property type="match status" value="1"/>
</dbReference>
<dbReference type="FunFam" id="3.40.50.620:FF:000222">
    <property type="entry name" value="Glutamate--tRNA ligase"/>
    <property type="match status" value="1"/>
</dbReference>
<dbReference type="Gene3D" id="2.40.240.100">
    <property type="match status" value="1"/>
</dbReference>
<dbReference type="Gene3D" id="3.40.50.620">
    <property type="entry name" value="HUPs"/>
    <property type="match status" value="1"/>
</dbReference>
<dbReference type="Gene3D" id="2.40.240.10">
    <property type="entry name" value="Ribosomal Protein L25, Chain P"/>
    <property type="match status" value="1"/>
</dbReference>
<dbReference type="HAMAP" id="MF_02076">
    <property type="entry name" value="Glu_tRNA_synth_type2"/>
    <property type="match status" value="1"/>
</dbReference>
<dbReference type="InterPro" id="IPR050132">
    <property type="entry name" value="Gln/Glu-tRNA_Ligase"/>
</dbReference>
<dbReference type="InterPro" id="IPR004526">
    <property type="entry name" value="Glu-tRNA-synth_arc/euk"/>
</dbReference>
<dbReference type="InterPro" id="IPR000924">
    <property type="entry name" value="Glu/Gln-tRNA-synth"/>
</dbReference>
<dbReference type="InterPro" id="IPR020058">
    <property type="entry name" value="Glu/Gln-tRNA-synth_Ib_cat-dom"/>
</dbReference>
<dbReference type="InterPro" id="IPR020059">
    <property type="entry name" value="Glu/Gln-tRNA-synth_Ib_codon-bd"/>
</dbReference>
<dbReference type="InterPro" id="IPR020056">
    <property type="entry name" value="Rbsml_bL25/Gln-tRNA_synth_N"/>
</dbReference>
<dbReference type="InterPro" id="IPR011035">
    <property type="entry name" value="Ribosomal_bL25/Gln-tRNA_synth"/>
</dbReference>
<dbReference type="InterPro" id="IPR014729">
    <property type="entry name" value="Rossmann-like_a/b/a_fold"/>
</dbReference>
<dbReference type="InterPro" id="IPR049437">
    <property type="entry name" value="tRNA-synt_1c_C2"/>
</dbReference>
<dbReference type="NCBIfam" id="TIGR00463">
    <property type="entry name" value="gltX_arch"/>
    <property type="match status" value="1"/>
</dbReference>
<dbReference type="NCBIfam" id="NF003169">
    <property type="entry name" value="PRK04156.1"/>
    <property type="match status" value="1"/>
</dbReference>
<dbReference type="PANTHER" id="PTHR43097:SF5">
    <property type="entry name" value="GLUTAMATE--TRNA LIGASE"/>
    <property type="match status" value="1"/>
</dbReference>
<dbReference type="PANTHER" id="PTHR43097">
    <property type="entry name" value="GLUTAMINE-TRNA LIGASE"/>
    <property type="match status" value="1"/>
</dbReference>
<dbReference type="Pfam" id="PF00749">
    <property type="entry name" value="tRNA-synt_1c"/>
    <property type="match status" value="1"/>
</dbReference>
<dbReference type="Pfam" id="PF03950">
    <property type="entry name" value="tRNA-synt_1c_C"/>
    <property type="match status" value="1"/>
</dbReference>
<dbReference type="Pfam" id="PF20974">
    <property type="entry name" value="tRNA-synt_1c_C2"/>
    <property type="match status" value="1"/>
</dbReference>
<dbReference type="PRINTS" id="PR00987">
    <property type="entry name" value="TRNASYNTHGLU"/>
</dbReference>
<dbReference type="SUPFAM" id="SSF52374">
    <property type="entry name" value="Nucleotidylyl transferase"/>
    <property type="match status" value="1"/>
</dbReference>
<dbReference type="SUPFAM" id="SSF50715">
    <property type="entry name" value="Ribosomal protein L25-like"/>
    <property type="match status" value="1"/>
</dbReference>